<comment type="function">
    <text evidence="1">Key enzyme in the regulation of glycerol uptake and metabolism. Catalyzes the phosphorylation of glycerol to yield sn-glycerol 3-phosphate.</text>
</comment>
<comment type="catalytic activity">
    <reaction evidence="1">
        <text>glycerol + ATP = sn-glycerol 3-phosphate + ADP + H(+)</text>
        <dbReference type="Rhea" id="RHEA:21644"/>
        <dbReference type="ChEBI" id="CHEBI:15378"/>
        <dbReference type="ChEBI" id="CHEBI:17754"/>
        <dbReference type="ChEBI" id="CHEBI:30616"/>
        <dbReference type="ChEBI" id="CHEBI:57597"/>
        <dbReference type="ChEBI" id="CHEBI:456216"/>
        <dbReference type="EC" id="2.7.1.30"/>
    </reaction>
</comment>
<comment type="activity regulation">
    <text evidence="1">Inhibited by fructose 1,6-bisphosphate (FBP).</text>
</comment>
<comment type="pathway">
    <text evidence="1">Polyol metabolism; glycerol degradation via glycerol kinase pathway; sn-glycerol 3-phosphate from glycerol: step 1/1.</text>
</comment>
<comment type="similarity">
    <text evidence="1">Belongs to the FGGY kinase family.</text>
</comment>
<name>GLPK_SHEB8</name>
<feature type="chain" id="PRO_1000020779" description="Glycerol kinase">
    <location>
        <begin position="1"/>
        <end position="494"/>
    </location>
</feature>
<feature type="binding site" evidence="1">
    <location>
        <position position="13"/>
    </location>
    <ligand>
        <name>ADP</name>
        <dbReference type="ChEBI" id="CHEBI:456216"/>
    </ligand>
</feature>
<feature type="binding site" evidence="1">
    <location>
        <position position="13"/>
    </location>
    <ligand>
        <name>ATP</name>
        <dbReference type="ChEBI" id="CHEBI:30616"/>
    </ligand>
</feature>
<feature type="binding site" evidence="1">
    <location>
        <position position="13"/>
    </location>
    <ligand>
        <name>sn-glycerol 3-phosphate</name>
        <dbReference type="ChEBI" id="CHEBI:57597"/>
    </ligand>
</feature>
<feature type="binding site" evidence="1">
    <location>
        <position position="14"/>
    </location>
    <ligand>
        <name>ATP</name>
        <dbReference type="ChEBI" id="CHEBI:30616"/>
    </ligand>
</feature>
<feature type="binding site" evidence="1">
    <location>
        <position position="15"/>
    </location>
    <ligand>
        <name>ATP</name>
        <dbReference type="ChEBI" id="CHEBI:30616"/>
    </ligand>
</feature>
<feature type="binding site" evidence="1">
    <location>
        <position position="17"/>
    </location>
    <ligand>
        <name>ADP</name>
        <dbReference type="ChEBI" id="CHEBI:456216"/>
    </ligand>
</feature>
<feature type="binding site" evidence="1">
    <location>
        <position position="83"/>
    </location>
    <ligand>
        <name>glycerol</name>
        <dbReference type="ChEBI" id="CHEBI:17754"/>
    </ligand>
</feature>
<feature type="binding site" evidence="1">
    <location>
        <position position="83"/>
    </location>
    <ligand>
        <name>sn-glycerol 3-phosphate</name>
        <dbReference type="ChEBI" id="CHEBI:57597"/>
    </ligand>
</feature>
<feature type="binding site" evidence="1">
    <location>
        <position position="84"/>
    </location>
    <ligand>
        <name>glycerol</name>
        <dbReference type="ChEBI" id="CHEBI:17754"/>
    </ligand>
</feature>
<feature type="binding site" evidence="1">
    <location>
        <position position="84"/>
    </location>
    <ligand>
        <name>sn-glycerol 3-phosphate</name>
        <dbReference type="ChEBI" id="CHEBI:57597"/>
    </ligand>
</feature>
<feature type="binding site" evidence="1">
    <location>
        <position position="135"/>
    </location>
    <ligand>
        <name>glycerol</name>
        <dbReference type="ChEBI" id="CHEBI:17754"/>
    </ligand>
</feature>
<feature type="binding site" evidence="1">
    <location>
        <position position="135"/>
    </location>
    <ligand>
        <name>sn-glycerol 3-phosphate</name>
        <dbReference type="ChEBI" id="CHEBI:57597"/>
    </ligand>
</feature>
<feature type="binding site" evidence="1">
    <location>
        <position position="244"/>
    </location>
    <ligand>
        <name>glycerol</name>
        <dbReference type="ChEBI" id="CHEBI:17754"/>
    </ligand>
</feature>
<feature type="binding site" evidence="1">
    <location>
        <position position="244"/>
    </location>
    <ligand>
        <name>sn-glycerol 3-phosphate</name>
        <dbReference type="ChEBI" id="CHEBI:57597"/>
    </ligand>
</feature>
<feature type="binding site" evidence="1">
    <location>
        <position position="245"/>
    </location>
    <ligand>
        <name>glycerol</name>
        <dbReference type="ChEBI" id="CHEBI:17754"/>
    </ligand>
</feature>
<feature type="binding site" evidence="1">
    <location>
        <position position="266"/>
    </location>
    <ligand>
        <name>ADP</name>
        <dbReference type="ChEBI" id="CHEBI:456216"/>
    </ligand>
</feature>
<feature type="binding site" evidence="1">
    <location>
        <position position="266"/>
    </location>
    <ligand>
        <name>ATP</name>
        <dbReference type="ChEBI" id="CHEBI:30616"/>
    </ligand>
</feature>
<feature type="binding site" evidence="1">
    <location>
        <position position="309"/>
    </location>
    <ligand>
        <name>ADP</name>
        <dbReference type="ChEBI" id="CHEBI:456216"/>
    </ligand>
</feature>
<feature type="binding site" evidence="1">
    <location>
        <position position="309"/>
    </location>
    <ligand>
        <name>ATP</name>
        <dbReference type="ChEBI" id="CHEBI:30616"/>
    </ligand>
</feature>
<feature type="binding site" evidence="1">
    <location>
        <position position="313"/>
    </location>
    <ligand>
        <name>ATP</name>
        <dbReference type="ChEBI" id="CHEBI:30616"/>
    </ligand>
</feature>
<feature type="binding site" evidence="1">
    <location>
        <position position="410"/>
    </location>
    <ligand>
        <name>ADP</name>
        <dbReference type="ChEBI" id="CHEBI:456216"/>
    </ligand>
</feature>
<feature type="binding site" evidence="1">
    <location>
        <position position="410"/>
    </location>
    <ligand>
        <name>ATP</name>
        <dbReference type="ChEBI" id="CHEBI:30616"/>
    </ligand>
</feature>
<feature type="binding site" evidence="1">
    <location>
        <position position="414"/>
    </location>
    <ligand>
        <name>ADP</name>
        <dbReference type="ChEBI" id="CHEBI:456216"/>
    </ligand>
</feature>
<sequence length="494" mass="54044">MQKKYVVALDQGTTSSRAIVFDHDANIVSVSQREFTQLYPNPGWVEHDPMEIWASQSSVLVEVLARAGIHSDEVAAIGITNQRETTVIWEKATGKPIYNAIVWQCRRSSEICEQLKAQGLEEYVRENTGLLLDPYFSGTKIKWILDNVPNARAQAERGELLFGTIDTWLVWKLTEGKVHVTDPTNAARTMLFNIHSLTWDNKLLEALDIPLSLLPEVKPSCSVYGTTRIAGEGSEIQVAGMAGDQQAALFGQLCVEPGMAKNTYGTGCFLLMNTGTKAVRSNHGLLTTVAVGPKGEVNYALEGSVFMGGATIQWLRDELGLIRDASDTEYFASKVADTNGVYLVPAFVGLGAPYWDPNARGALFGLTRGANRNHIIRAALESIAYQSKDLLDAMTKDSGVSLKRLKVDGGAVANDFLMQFQADITDVEVLRPSVCETTALGAAFLAGLAVGFWESVIELEHKACIDKHFIPNIDAETRVRLYAGWQDAVARTRA</sequence>
<accession>A6WIC0</accession>
<organism>
    <name type="scientific">Shewanella baltica (strain OS185)</name>
    <dbReference type="NCBI Taxonomy" id="402882"/>
    <lineage>
        <taxon>Bacteria</taxon>
        <taxon>Pseudomonadati</taxon>
        <taxon>Pseudomonadota</taxon>
        <taxon>Gammaproteobacteria</taxon>
        <taxon>Alteromonadales</taxon>
        <taxon>Shewanellaceae</taxon>
        <taxon>Shewanella</taxon>
    </lineage>
</organism>
<evidence type="ECO:0000255" key="1">
    <source>
        <dbReference type="HAMAP-Rule" id="MF_00186"/>
    </source>
</evidence>
<keyword id="KW-0067">ATP-binding</keyword>
<keyword id="KW-0319">Glycerol metabolism</keyword>
<keyword id="KW-0418">Kinase</keyword>
<keyword id="KW-0547">Nucleotide-binding</keyword>
<keyword id="KW-0808">Transferase</keyword>
<gene>
    <name evidence="1" type="primary">glpK</name>
    <name type="ordered locus">Shew185_0390</name>
</gene>
<protein>
    <recommendedName>
        <fullName evidence="1">Glycerol kinase</fullName>
        <ecNumber evidence="1">2.7.1.30</ecNumber>
    </recommendedName>
    <alternativeName>
        <fullName evidence="1">ATP:glycerol 3-phosphotransferase</fullName>
    </alternativeName>
    <alternativeName>
        <fullName evidence="1">Glycerokinase</fullName>
        <shortName evidence="1">GK</shortName>
    </alternativeName>
</protein>
<dbReference type="EC" id="2.7.1.30" evidence="1"/>
<dbReference type="EMBL" id="CP000753">
    <property type="protein sequence ID" value="ABS06559.1"/>
    <property type="molecule type" value="Genomic_DNA"/>
</dbReference>
<dbReference type="RefSeq" id="WP_011982221.1">
    <property type="nucleotide sequence ID" value="NC_009665.1"/>
</dbReference>
<dbReference type="SMR" id="A6WIC0"/>
<dbReference type="KEGG" id="sbm:Shew185_0390"/>
<dbReference type="HOGENOM" id="CLU_009281_2_3_6"/>
<dbReference type="UniPathway" id="UPA00618">
    <property type="reaction ID" value="UER00672"/>
</dbReference>
<dbReference type="GO" id="GO:0005829">
    <property type="term" value="C:cytosol"/>
    <property type="evidence" value="ECO:0007669"/>
    <property type="project" value="TreeGrafter"/>
</dbReference>
<dbReference type="GO" id="GO:0005524">
    <property type="term" value="F:ATP binding"/>
    <property type="evidence" value="ECO:0007669"/>
    <property type="project" value="UniProtKB-UniRule"/>
</dbReference>
<dbReference type="GO" id="GO:0004370">
    <property type="term" value="F:glycerol kinase activity"/>
    <property type="evidence" value="ECO:0000250"/>
    <property type="project" value="UniProtKB"/>
</dbReference>
<dbReference type="GO" id="GO:0019563">
    <property type="term" value="P:glycerol catabolic process"/>
    <property type="evidence" value="ECO:0007669"/>
    <property type="project" value="UniProtKB-UniRule"/>
</dbReference>
<dbReference type="GO" id="GO:0006071">
    <property type="term" value="P:glycerol metabolic process"/>
    <property type="evidence" value="ECO:0000250"/>
    <property type="project" value="UniProtKB"/>
</dbReference>
<dbReference type="GO" id="GO:0006072">
    <property type="term" value="P:glycerol-3-phosphate metabolic process"/>
    <property type="evidence" value="ECO:0007669"/>
    <property type="project" value="InterPro"/>
</dbReference>
<dbReference type="CDD" id="cd07786">
    <property type="entry name" value="FGGY_EcGK_like"/>
    <property type="match status" value="1"/>
</dbReference>
<dbReference type="FunFam" id="3.30.420.40:FF:000007">
    <property type="entry name" value="Glycerol kinase"/>
    <property type="match status" value="1"/>
</dbReference>
<dbReference type="FunFam" id="3.30.420.40:FF:000008">
    <property type="entry name" value="Glycerol kinase"/>
    <property type="match status" value="1"/>
</dbReference>
<dbReference type="Gene3D" id="3.30.420.40">
    <property type="match status" value="2"/>
</dbReference>
<dbReference type="HAMAP" id="MF_00186">
    <property type="entry name" value="Glycerol_kin"/>
    <property type="match status" value="1"/>
</dbReference>
<dbReference type="InterPro" id="IPR043129">
    <property type="entry name" value="ATPase_NBD"/>
</dbReference>
<dbReference type="InterPro" id="IPR000577">
    <property type="entry name" value="Carb_kinase_FGGY"/>
</dbReference>
<dbReference type="InterPro" id="IPR018483">
    <property type="entry name" value="Carb_kinase_FGGY_CS"/>
</dbReference>
<dbReference type="InterPro" id="IPR018485">
    <property type="entry name" value="FGGY_C"/>
</dbReference>
<dbReference type="InterPro" id="IPR018484">
    <property type="entry name" value="FGGY_N"/>
</dbReference>
<dbReference type="InterPro" id="IPR005999">
    <property type="entry name" value="Glycerol_kin"/>
</dbReference>
<dbReference type="NCBIfam" id="TIGR01311">
    <property type="entry name" value="glycerol_kin"/>
    <property type="match status" value="1"/>
</dbReference>
<dbReference type="NCBIfam" id="NF000756">
    <property type="entry name" value="PRK00047.1"/>
    <property type="match status" value="1"/>
</dbReference>
<dbReference type="PANTHER" id="PTHR10196:SF69">
    <property type="entry name" value="GLYCEROL KINASE"/>
    <property type="match status" value="1"/>
</dbReference>
<dbReference type="PANTHER" id="PTHR10196">
    <property type="entry name" value="SUGAR KINASE"/>
    <property type="match status" value="1"/>
</dbReference>
<dbReference type="Pfam" id="PF02782">
    <property type="entry name" value="FGGY_C"/>
    <property type="match status" value="1"/>
</dbReference>
<dbReference type="Pfam" id="PF00370">
    <property type="entry name" value="FGGY_N"/>
    <property type="match status" value="1"/>
</dbReference>
<dbReference type="PIRSF" id="PIRSF000538">
    <property type="entry name" value="GlpK"/>
    <property type="match status" value="1"/>
</dbReference>
<dbReference type="SUPFAM" id="SSF53067">
    <property type="entry name" value="Actin-like ATPase domain"/>
    <property type="match status" value="2"/>
</dbReference>
<dbReference type="PROSITE" id="PS00933">
    <property type="entry name" value="FGGY_KINASES_1"/>
    <property type="match status" value="1"/>
</dbReference>
<dbReference type="PROSITE" id="PS00445">
    <property type="entry name" value="FGGY_KINASES_2"/>
    <property type="match status" value="1"/>
</dbReference>
<reference key="1">
    <citation type="submission" date="2007-07" db="EMBL/GenBank/DDBJ databases">
        <title>Complete sequence of chromosome of Shewanella baltica OS185.</title>
        <authorList>
            <consortium name="US DOE Joint Genome Institute"/>
            <person name="Copeland A."/>
            <person name="Lucas S."/>
            <person name="Lapidus A."/>
            <person name="Barry K."/>
            <person name="Glavina del Rio T."/>
            <person name="Dalin E."/>
            <person name="Tice H."/>
            <person name="Pitluck S."/>
            <person name="Sims D."/>
            <person name="Brettin T."/>
            <person name="Bruce D."/>
            <person name="Detter J.C."/>
            <person name="Han C."/>
            <person name="Schmutz J."/>
            <person name="Larimer F."/>
            <person name="Land M."/>
            <person name="Hauser L."/>
            <person name="Kyrpides N."/>
            <person name="Mikhailova N."/>
            <person name="Brettar I."/>
            <person name="Rodrigues J."/>
            <person name="Konstantinidis K."/>
            <person name="Tiedje J."/>
            <person name="Richardson P."/>
        </authorList>
    </citation>
    <scope>NUCLEOTIDE SEQUENCE [LARGE SCALE GENOMIC DNA]</scope>
    <source>
        <strain>OS185</strain>
    </source>
</reference>
<proteinExistence type="inferred from homology"/>